<accession>Q67MP0</accession>
<feature type="chain" id="PRO_0000357245" description="Methylthioribose-1-phosphate isomerase">
    <location>
        <begin position="1"/>
        <end position="359"/>
    </location>
</feature>
<feature type="active site" description="Proton donor" evidence="1">
    <location>
        <position position="241"/>
    </location>
</feature>
<feature type="binding site" evidence="1">
    <location>
        <begin position="50"/>
        <end position="52"/>
    </location>
    <ligand>
        <name>substrate</name>
    </ligand>
</feature>
<feature type="binding site" evidence="1">
    <location>
        <position position="93"/>
    </location>
    <ligand>
        <name>substrate</name>
    </ligand>
</feature>
<feature type="binding site" evidence="1">
    <location>
        <position position="200"/>
    </location>
    <ligand>
        <name>substrate</name>
    </ligand>
</feature>
<feature type="binding site" evidence="1">
    <location>
        <begin position="251"/>
        <end position="252"/>
    </location>
    <ligand>
        <name>substrate</name>
    </ligand>
</feature>
<feature type="site" description="Transition state stabilizer" evidence="1">
    <location>
        <position position="161"/>
    </location>
</feature>
<dbReference type="EC" id="5.3.1.23" evidence="1"/>
<dbReference type="EMBL" id="AP006840">
    <property type="protein sequence ID" value="BAD41053.1"/>
    <property type="molecule type" value="Genomic_DNA"/>
</dbReference>
<dbReference type="RefSeq" id="WP_011196193.1">
    <property type="nucleotide sequence ID" value="NC_006177.1"/>
</dbReference>
<dbReference type="SMR" id="Q67MP0"/>
<dbReference type="STRING" id="292459.STH2068"/>
<dbReference type="KEGG" id="sth:STH2068"/>
<dbReference type="eggNOG" id="COG0182">
    <property type="taxonomic scope" value="Bacteria"/>
</dbReference>
<dbReference type="HOGENOM" id="CLU_016218_1_2_9"/>
<dbReference type="OrthoDB" id="9803436at2"/>
<dbReference type="UniPathway" id="UPA00904">
    <property type="reaction ID" value="UER00874"/>
</dbReference>
<dbReference type="Proteomes" id="UP000000417">
    <property type="component" value="Chromosome"/>
</dbReference>
<dbReference type="GO" id="GO:0046523">
    <property type="term" value="F:S-methyl-5-thioribose-1-phosphate isomerase activity"/>
    <property type="evidence" value="ECO:0007669"/>
    <property type="project" value="UniProtKB-UniRule"/>
</dbReference>
<dbReference type="GO" id="GO:0019509">
    <property type="term" value="P:L-methionine salvage from methylthioadenosine"/>
    <property type="evidence" value="ECO:0007669"/>
    <property type="project" value="UniProtKB-UniRule"/>
</dbReference>
<dbReference type="FunFam" id="1.20.120.420:FF:000003">
    <property type="entry name" value="Methylthioribose-1-phosphate isomerase"/>
    <property type="match status" value="1"/>
</dbReference>
<dbReference type="FunFam" id="3.40.50.10470:FF:000006">
    <property type="entry name" value="Methylthioribose-1-phosphate isomerase"/>
    <property type="match status" value="1"/>
</dbReference>
<dbReference type="Gene3D" id="1.20.120.420">
    <property type="entry name" value="translation initiation factor eif-2b, domain 1"/>
    <property type="match status" value="1"/>
</dbReference>
<dbReference type="Gene3D" id="3.40.50.10470">
    <property type="entry name" value="Translation initiation factor eif-2b, domain 2"/>
    <property type="match status" value="1"/>
</dbReference>
<dbReference type="HAMAP" id="MF_01678">
    <property type="entry name" value="Salvage_MtnA"/>
    <property type="match status" value="1"/>
</dbReference>
<dbReference type="InterPro" id="IPR000649">
    <property type="entry name" value="IF-2B-related"/>
</dbReference>
<dbReference type="InterPro" id="IPR005251">
    <property type="entry name" value="IF-M1Pi"/>
</dbReference>
<dbReference type="InterPro" id="IPR042529">
    <property type="entry name" value="IF_2B-like_C"/>
</dbReference>
<dbReference type="InterPro" id="IPR011559">
    <property type="entry name" value="Initiation_fac_2B_a/b/d"/>
</dbReference>
<dbReference type="InterPro" id="IPR027363">
    <property type="entry name" value="M1Pi_N"/>
</dbReference>
<dbReference type="InterPro" id="IPR037171">
    <property type="entry name" value="NagB/RpiA_transferase-like"/>
</dbReference>
<dbReference type="NCBIfam" id="TIGR00524">
    <property type="entry name" value="eIF-2B_rel"/>
    <property type="match status" value="1"/>
</dbReference>
<dbReference type="NCBIfam" id="NF004326">
    <property type="entry name" value="PRK05720.1"/>
    <property type="match status" value="1"/>
</dbReference>
<dbReference type="NCBIfam" id="TIGR00512">
    <property type="entry name" value="salvage_mtnA"/>
    <property type="match status" value="1"/>
</dbReference>
<dbReference type="PANTHER" id="PTHR43475">
    <property type="entry name" value="METHYLTHIORIBOSE-1-PHOSPHATE ISOMERASE"/>
    <property type="match status" value="1"/>
</dbReference>
<dbReference type="PANTHER" id="PTHR43475:SF1">
    <property type="entry name" value="METHYLTHIORIBOSE-1-PHOSPHATE ISOMERASE"/>
    <property type="match status" value="1"/>
</dbReference>
<dbReference type="Pfam" id="PF01008">
    <property type="entry name" value="IF-2B"/>
    <property type="match status" value="1"/>
</dbReference>
<dbReference type="SUPFAM" id="SSF100950">
    <property type="entry name" value="NagB/RpiA/CoA transferase-like"/>
    <property type="match status" value="1"/>
</dbReference>
<comment type="function">
    <text evidence="1">Catalyzes the interconversion of methylthioribose-1-phosphate (MTR-1-P) into methylthioribulose-1-phosphate (MTRu-1-P).</text>
</comment>
<comment type="catalytic activity">
    <reaction evidence="1">
        <text>5-(methylsulfanyl)-alpha-D-ribose 1-phosphate = 5-(methylsulfanyl)-D-ribulose 1-phosphate</text>
        <dbReference type="Rhea" id="RHEA:19989"/>
        <dbReference type="ChEBI" id="CHEBI:58533"/>
        <dbReference type="ChEBI" id="CHEBI:58548"/>
        <dbReference type="EC" id="5.3.1.23"/>
    </reaction>
</comment>
<comment type="pathway">
    <text evidence="1">Amino-acid biosynthesis; L-methionine biosynthesis via salvage pathway; L-methionine from S-methyl-5-thio-alpha-D-ribose 1-phosphate: step 1/6.</text>
</comment>
<comment type="similarity">
    <text evidence="2">Belongs to the eIF-2B alpha/beta/delta subunits family. MtnA subfamily.</text>
</comment>
<evidence type="ECO:0000255" key="1">
    <source>
        <dbReference type="HAMAP-Rule" id="MF_01678"/>
    </source>
</evidence>
<evidence type="ECO:0000305" key="2"/>
<keyword id="KW-0028">Amino-acid biosynthesis</keyword>
<keyword id="KW-0413">Isomerase</keyword>
<keyword id="KW-0486">Methionine biosynthesis</keyword>
<keyword id="KW-1185">Reference proteome</keyword>
<gene>
    <name evidence="1" type="primary">mtnA</name>
    <name type="ordered locus">STH2068</name>
</gene>
<proteinExistence type="inferred from homology"/>
<organism>
    <name type="scientific">Symbiobacterium thermophilum (strain DSM 24528 / JCM 14929 / IAM 14863 / T)</name>
    <dbReference type="NCBI Taxonomy" id="292459"/>
    <lineage>
        <taxon>Bacteria</taxon>
        <taxon>Bacillati</taxon>
        <taxon>Bacillota</taxon>
        <taxon>Clostridia</taxon>
        <taxon>Eubacteriales</taxon>
        <taxon>Symbiobacteriaceae</taxon>
        <taxon>Symbiobacterium</taxon>
    </lineage>
</organism>
<protein>
    <recommendedName>
        <fullName evidence="1">Methylthioribose-1-phosphate isomerase</fullName>
        <shortName evidence="1">M1Pi</shortName>
        <shortName evidence="1">MTR-1-P isomerase</shortName>
        <ecNumber evidence="1">5.3.1.23</ecNumber>
    </recommendedName>
    <alternativeName>
        <fullName evidence="1">S-methyl-5-thioribose-1-phosphate isomerase</fullName>
    </alternativeName>
</protein>
<sequence>MPKQIEPVALDDAGSALVIVDQTLIPNETRYLRLTTPEETWEAIRSLRVRGAPAIGIAAAMGLYLGVKGSEAADFEDFYHEFRQVKAYLASARPTAVNLFWALDRMEACLLRHRDRPIPEIKEALRAEAEAIREEDARANRTIGEYALSLLKPGMGILTHCNAGALATAAYGTALAPIYLGQERGYNFRVFADETRPLLQGARLTAYELMQAGVDVTLICDNMASAVMKNGWVDAVFVGCDRVAANGDTANKIGTSGVAILARHYGIPFYVCAPTSTIDLRCPTGADIVIEERRPEEVTEQWYAKRMAPEGVKVYNPAFDVTDADLITAIITEYGIARPPYTESLKELFRRKEEAERRA</sequence>
<name>MTNA_SYMTH</name>
<reference key="1">
    <citation type="journal article" date="2004" name="Nucleic Acids Res.">
        <title>Genome sequence of Symbiobacterium thermophilum, an uncultivable bacterium that depends on microbial commensalism.</title>
        <authorList>
            <person name="Ueda K."/>
            <person name="Yamashita A."/>
            <person name="Ishikawa J."/>
            <person name="Shimada M."/>
            <person name="Watsuji T."/>
            <person name="Morimura K."/>
            <person name="Ikeda H."/>
            <person name="Hattori M."/>
            <person name="Beppu T."/>
        </authorList>
    </citation>
    <scope>NUCLEOTIDE SEQUENCE [LARGE SCALE GENOMIC DNA]</scope>
    <source>
        <strain>DSM 24528 / JCM 14929 / IAM 14863 / T</strain>
    </source>
</reference>